<sequence length="352" mass="40340">MSNTTSALPSSVPAVSLDPNATLCQDWEQSHHLLFHLANLSLGLGFLIPTTLALHMIFLRLLLMTGCSLFIAWATLYRCTLDVMVWNVVFLLVNFMHFFFLLYKRRPIKIDRELKSVYKRMFEPLHVREALFQRLTGQFCTIQTLKKGQVYAAEDKTSVDERLSILLKGKMKVSYRGHFLHNIYTNAFIDSPEFRSTQMNRGERFQVTIAAEENCKLLCWSRERLTYFLESESFLNEVFRYLIGKDITNKLYSLNDPTLSDKAVKKMDRQPSLCSQLSMMQMRNSMASTSDTDDVLNQILRGGSTGSSLQKNPLTKTSTTMKPIEEGLEDDVFESESPTTSQNVSKTTKKDI</sequence>
<name>POPD1_DANRE</name>
<evidence type="ECO:0000250" key="1">
    <source>
        <dbReference type="UniProtKB" id="Q8NE79"/>
    </source>
</evidence>
<evidence type="ECO:0000250" key="2">
    <source>
        <dbReference type="UniProtKB" id="Q9ES83"/>
    </source>
</evidence>
<evidence type="ECO:0000255" key="3"/>
<evidence type="ECO:0000256" key="4">
    <source>
        <dbReference type="SAM" id="MobiDB-lite"/>
    </source>
</evidence>
<evidence type="ECO:0000269" key="5">
    <source>
    </source>
</evidence>
<evidence type="ECO:0000303" key="6">
    <source ref="1"/>
</evidence>
<evidence type="ECO:0000305" key="7"/>
<organism>
    <name type="scientific">Danio rerio</name>
    <name type="common">Zebrafish</name>
    <name type="synonym">Brachydanio rerio</name>
    <dbReference type="NCBI Taxonomy" id="7955"/>
    <lineage>
        <taxon>Eukaryota</taxon>
        <taxon>Metazoa</taxon>
        <taxon>Chordata</taxon>
        <taxon>Craniata</taxon>
        <taxon>Vertebrata</taxon>
        <taxon>Euteleostomi</taxon>
        <taxon>Actinopterygii</taxon>
        <taxon>Neopterygii</taxon>
        <taxon>Teleostei</taxon>
        <taxon>Ostariophysi</taxon>
        <taxon>Cypriniformes</taxon>
        <taxon>Danionidae</taxon>
        <taxon>Danioninae</taxon>
        <taxon>Danio</taxon>
    </lineage>
</organism>
<comment type="function">
    <text evidence="1 2 5">Cell adhesion molecule involved in the establishment and/or maintenance of cell integrity. Involved in skeletal muscle and heart development as well as in the maintenance of heart function (PubMed:26642364). May play a role in vamp3-mediated vesicular transport and recycling of receptor molecules. Involved in the formation and regulation of the tight junction (TJ) paracellular permeability barrier in epithelial cells. May induce primordial adhesive contact and aggregation of epithelial cells in a Ca(2+)-independent manner. May be involved in epithelial movement during corneal sheet formation and regeneration. May play a role in the regulation of cell shape and movement by modulating the Rho-GTPase activity. May also be involved in striated muscle regeneration and in the regulation of cell spreading (By similarity).</text>
</comment>
<comment type="subcellular location">
    <subcellularLocation>
        <location evidence="1">Lateral cell membrane</location>
    </subcellularLocation>
    <subcellularLocation>
        <location evidence="1">Cell junction</location>
        <location evidence="1">Tight junction</location>
    </subcellularLocation>
    <subcellularLocation>
        <location evidence="5">Membrane</location>
        <topology evidence="7">Multi-pass membrane protein</topology>
    </subcellularLocation>
    <subcellularLocation>
        <location evidence="5">Cell membrane</location>
        <location evidence="5">Sarcolemma</location>
    </subcellularLocation>
    <subcellularLocation>
        <location evidence="2">Membrane</location>
        <location evidence="2">Caveola</location>
    </subcellularLocation>
    <text evidence="2">Detected at points of cell-cell contact in confluent epithelial sheets. Colocalizes with components of the adherens and tight junctions (By similarity).</text>
</comment>
<comment type="alternative products">
    <event type="alternative splicing"/>
    <isoform>
        <id>Q5PQZ7-1</id>
        <name>1</name>
        <sequence type="displayed"/>
    </isoform>
    <isoform>
        <id>Q5PQZ7-2</id>
        <name>2</name>
        <sequence type="described" ref="VSP_039269"/>
    </isoform>
</comment>
<comment type="tissue specificity">
    <text evidence="5">Expressed in skeletal muscle (at protein level).</text>
</comment>
<comment type="disruption phenotype">
    <text evidence="5">Morpholino knockdown of the protein causes cardiac edema in 70% of the injected morphants. They show malformed myotendinous junction and, in 80% of the morphants, skeletal muscle is characterized by myofibrillar misalignment and fiber detachment.</text>
</comment>
<comment type="similarity">
    <text evidence="7">Belongs to the popeye family.</text>
</comment>
<protein>
    <recommendedName>
        <fullName>Popeye domain-containing protein 1</fullName>
        <shortName>Popeye protein 1</shortName>
    </recommendedName>
    <alternativeName>
        <fullName>Blood vessel epicardial substance</fullName>
        <shortName>BVES</shortName>
        <shortName>hBVES</shortName>
    </alternativeName>
</protein>
<dbReference type="EMBL" id="AY293117">
    <property type="protein sequence ID" value="AAQ57586.1"/>
    <property type="molecule type" value="mRNA"/>
</dbReference>
<dbReference type="EMBL" id="AY293118">
    <property type="protein sequence ID" value="AAQ57587.1"/>
    <property type="molecule type" value="mRNA"/>
</dbReference>
<dbReference type="EMBL" id="BC086956">
    <property type="protein sequence ID" value="AAH86956.1"/>
    <property type="molecule type" value="mRNA"/>
</dbReference>
<dbReference type="RefSeq" id="NP_001001847.2">
    <molecule id="Q5PQZ7-2"/>
    <property type="nucleotide sequence ID" value="NM_001001847.2"/>
</dbReference>
<dbReference type="RefSeq" id="NP_001244091.1">
    <molecule id="Q5PQZ7-2"/>
    <property type="nucleotide sequence ID" value="NM_001257162.1"/>
</dbReference>
<dbReference type="RefSeq" id="NP_001244092.1">
    <molecule id="Q5PQZ7-1"/>
    <property type="nucleotide sequence ID" value="NM_001257163.1"/>
</dbReference>
<dbReference type="RefSeq" id="NP_001244093.1">
    <molecule id="Q5PQZ7-1"/>
    <property type="nucleotide sequence ID" value="NM_001257164.1"/>
</dbReference>
<dbReference type="SMR" id="Q5PQZ7"/>
<dbReference type="FunCoup" id="Q5PQZ7">
    <property type="interactions" value="911"/>
</dbReference>
<dbReference type="STRING" id="7955.ENSDARP00000075860"/>
<dbReference type="GlyCosmos" id="Q5PQZ7">
    <property type="glycosylation" value="2 sites, No reported glycans"/>
</dbReference>
<dbReference type="PaxDb" id="7955-ENSDARP00000075860"/>
<dbReference type="Ensembl" id="ENSDART00000081418">
    <molecule id="Q5PQZ7-1"/>
    <property type="protein sequence ID" value="ENSDARP00000075860"/>
    <property type="gene ID" value="ENSDARG00000058548"/>
</dbReference>
<dbReference type="Ensembl" id="ENSDART00000184895">
    <molecule id="Q5PQZ7-1"/>
    <property type="protein sequence ID" value="ENSDARP00000152394"/>
    <property type="gene ID" value="ENSDARG00000058548"/>
</dbReference>
<dbReference type="GeneID" id="415107"/>
<dbReference type="KEGG" id="dre:415107"/>
<dbReference type="AGR" id="ZFIN:ZDB-GENE-040624-11"/>
<dbReference type="CTD" id="11149"/>
<dbReference type="ZFIN" id="ZDB-GENE-040624-11">
    <property type="gene designation" value="popdc1"/>
</dbReference>
<dbReference type="eggNOG" id="ENOG502QRV2">
    <property type="taxonomic scope" value="Eukaryota"/>
</dbReference>
<dbReference type="HOGENOM" id="CLU_048494_0_0_1"/>
<dbReference type="InParanoid" id="Q5PQZ7"/>
<dbReference type="OMA" id="SCQEWEQ"/>
<dbReference type="OrthoDB" id="425611at2759"/>
<dbReference type="PhylomeDB" id="Q5PQZ7"/>
<dbReference type="TreeFam" id="TF326644"/>
<dbReference type="PRO" id="PR:Q5PQZ7"/>
<dbReference type="Proteomes" id="UP000000437">
    <property type="component" value="Chromosome 16"/>
</dbReference>
<dbReference type="Bgee" id="ENSDARG00000058548">
    <property type="expression patterns" value="Expressed in heart and 29 other cell types or tissues"/>
</dbReference>
<dbReference type="ExpressionAtlas" id="Q5PQZ7">
    <property type="expression patterns" value="baseline and differential"/>
</dbReference>
<dbReference type="GO" id="GO:0005923">
    <property type="term" value="C:bicellular tight junction"/>
    <property type="evidence" value="ECO:0000250"/>
    <property type="project" value="UniProtKB"/>
</dbReference>
<dbReference type="GO" id="GO:0005901">
    <property type="term" value="C:caveola"/>
    <property type="evidence" value="ECO:0000250"/>
    <property type="project" value="UniProtKB"/>
</dbReference>
<dbReference type="GO" id="GO:0016328">
    <property type="term" value="C:lateral plasma membrane"/>
    <property type="evidence" value="ECO:0000250"/>
    <property type="project" value="UniProtKB"/>
</dbReference>
<dbReference type="GO" id="GO:0016020">
    <property type="term" value="C:membrane"/>
    <property type="evidence" value="ECO:0000250"/>
    <property type="project" value="UniProtKB"/>
</dbReference>
<dbReference type="GO" id="GO:0005886">
    <property type="term" value="C:plasma membrane"/>
    <property type="evidence" value="ECO:0000250"/>
    <property type="project" value="UniProtKB"/>
</dbReference>
<dbReference type="GO" id="GO:0042383">
    <property type="term" value="C:sarcolemma"/>
    <property type="evidence" value="ECO:0000314"/>
    <property type="project" value="UniProtKB"/>
</dbReference>
<dbReference type="GO" id="GO:0030552">
    <property type="term" value="F:cAMP binding"/>
    <property type="evidence" value="ECO:0000318"/>
    <property type="project" value="GO_Central"/>
</dbReference>
<dbReference type="GO" id="GO:0005198">
    <property type="term" value="F:structural molecule activity"/>
    <property type="evidence" value="ECO:0000250"/>
    <property type="project" value="UniProtKB"/>
</dbReference>
<dbReference type="GO" id="GO:0070830">
    <property type="term" value="P:bicellular tight junction assembly"/>
    <property type="evidence" value="ECO:0000315"/>
    <property type="project" value="ZFIN"/>
</dbReference>
<dbReference type="GO" id="GO:0045216">
    <property type="term" value="P:cell-cell junction organization"/>
    <property type="evidence" value="ECO:0000315"/>
    <property type="project" value="ZFIN"/>
</dbReference>
<dbReference type="GO" id="GO:0090504">
    <property type="term" value="P:epiboly"/>
    <property type="evidence" value="ECO:0000315"/>
    <property type="project" value="ZFIN"/>
</dbReference>
<dbReference type="GO" id="GO:0090136">
    <property type="term" value="P:epithelial cell-cell adhesion"/>
    <property type="evidence" value="ECO:0000250"/>
    <property type="project" value="UniProtKB"/>
</dbReference>
<dbReference type="GO" id="GO:0060429">
    <property type="term" value="P:epithelium development"/>
    <property type="evidence" value="ECO:0000315"/>
    <property type="project" value="ZFIN"/>
</dbReference>
<dbReference type="GO" id="GO:0061436">
    <property type="term" value="P:establishment of skin barrier"/>
    <property type="evidence" value="ECO:0000315"/>
    <property type="project" value="ZFIN"/>
</dbReference>
<dbReference type="GO" id="GO:0042462">
    <property type="term" value="P:eye photoreceptor cell development"/>
    <property type="evidence" value="ECO:0000315"/>
    <property type="project" value="ZFIN"/>
</dbReference>
<dbReference type="GO" id="GO:0060047">
    <property type="term" value="P:heart contraction"/>
    <property type="evidence" value="ECO:0000315"/>
    <property type="project" value="ZFIN"/>
</dbReference>
<dbReference type="GO" id="GO:0007507">
    <property type="term" value="P:heart development"/>
    <property type="evidence" value="ECO:0000315"/>
    <property type="project" value="UniProtKB"/>
</dbReference>
<dbReference type="GO" id="GO:0001947">
    <property type="term" value="P:heart looping"/>
    <property type="evidence" value="ECO:0000315"/>
    <property type="project" value="ZFIN"/>
</dbReference>
<dbReference type="GO" id="GO:0003151">
    <property type="term" value="P:outflow tract morphogenesis"/>
    <property type="evidence" value="ECO:0000315"/>
    <property type="project" value="ZFIN"/>
</dbReference>
<dbReference type="GO" id="GO:0040017">
    <property type="term" value="P:positive regulation of locomotion"/>
    <property type="evidence" value="ECO:0000250"/>
    <property type="project" value="UniProtKB"/>
</dbReference>
<dbReference type="GO" id="GO:0001921">
    <property type="term" value="P:positive regulation of receptor recycling"/>
    <property type="evidence" value="ECO:0000250"/>
    <property type="project" value="UniProtKB"/>
</dbReference>
<dbReference type="GO" id="GO:0098901">
    <property type="term" value="P:regulation of cardiac muscle cell action potential"/>
    <property type="evidence" value="ECO:0000315"/>
    <property type="project" value="ZFIN"/>
</dbReference>
<dbReference type="GO" id="GO:0008360">
    <property type="term" value="P:regulation of cell shape"/>
    <property type="evidence" value="ECO:0000250"/>
    <property type="project" value="UniProtKB"/>
</dbReference>
<dbReference type="GO" id="GO:0043087">
    <property type="term" value="P:regulation of GTPase activity"/>
    <property type="evidence" value="ECO:0000250"/>
    <property type="project" value="UniProtKB"/>
</dbReference>
<dbReference type="GO" id="GO:0042391">
    <property type="term" value="P:regulation of membrane potential"/>
    <property type="evidence" value="ECO:0000318"/>
    <property type="project" value="GO_Central"/>
</dbReference>
<dbReference type="GO" id="GO:0002931">
    <property type="term" value="P:response to ischemia"/>
    <property type="evidence" value="ECO:0000250"/>
    <property type="project" value="UniProtKB"/>
</dbReference>
<dbReference type="GO" id="GO:0060041">
    <property type="term" value="P:retina development in camera-type eye"/>
    <property type="evidence" value="ECO:0000315"/>
    <property type="project" value="ZFIN"/>
</dbReference>
<dbReference type="GO" id="GO:0010842">
    <property type="term" value="P:retina layer formation"/>
    <property type="evidence" value="ECO:0000315"/>
    <property type="project" value="ZFIN"/>
</dbReference>
<dbReference type="GO" id="GO:0007519">
    <property type="term" value="P:skeletal muscle tissue development"/>
    <property type="evidence" value="ECO:0000315"/>
    <property type="project" value="UniProtKB"/>
</dbReference>
<dbReference type="GO" id="GO:0014866">
    <property type="term" value="P:skeletal myofibril assembly"/>
    <property type="evidence" value="ECO:0000315"/>
    <property type="project" value="ZFIN"/>
</dbReference>
<dbReference type="GO" id="GO:0051146">
    <property type="term" value="P:striated muscle cell differentiation"/>
    <property type="evidence" value="ECO:0000318"/>
    <property type="project" value="GO_Central"/>
</dbReference>
<dbReference type="GO" id="GO:0034446">
    <property type="term" value="P:substrate adhesion-dependent cell spreading"/>
    <property type="evidence" value="ECO:0000250"/>
    <property type="project" value="UniProtKB"/>
</dbReference>
<dbReference type="GO" id="GO:0016192">
    <property type="term" value="P:vesicle-mediated transport"/>
    <property type="evidence" value="ECO:0000250"/>
    <property type="project" value="UniProtKB"/>
</dbReference>
<dbReference type="FunFam" id="2.60.120.10:FF:000166">
    <property type="entry name" value="blood vessel epicardial substance isoform X1"/>
    <property type="match status" value="1"/>
</dbReference>
<dbReference type="Gene3D" id="2.60.120.10">
    <property type="entry name" value="Jelly Rolls"/>
    <property type="match status" value="1"/>
</dbReference>
<dbReference type="InterPro" id="IPR018490">
    <property type="entry name" value="cNMP-bd_dom_sf"/>
</dbReference>
<dbReference type="InterPro" id="IPR006916">
    <property type="entry name" value="POPDC1-3"/>
</dbReference>
<dbReference type="InterPro" id="IPR055272">
    <property type="entry name" value="POPDC1-3_dom"/>
</dbReference>
<dbReference type="InterPro" id="IPR014710">
    <property type="entry name" value="RmlC-like_jellyroll"/>
</dbReference>
<dbReference type="PANTHER" id="PTHR12101:SF17">
    <property type="entry name" value="BLOOD VESSEL EPICARDIAL SUBSTANCE"/>
    <property type="match status" value="1"/>
</dbReference>
<dbReference type="PANTHER" id="PTHR12101">
    <property type="entry name" value="POPEYE DOMAIN CONTAINING PROTEIN"/>
    <property type="match status" value="1"/>
</dbReference>
<dbReference type="Pfam" id="PF04831">
    <property type="entry name" value="POPDC1-3"/>
    <property type="match status" value="1"/>
</dbReference>
<dbReference type="SUPFAM" id="SSF51206">
    <property type="entry name" value="cAMP-binding domain-like"/>
    <property type="match status" value="1"/>
</dbReference>
<reference key="1">
    <citation type="submission" date="2003-05" db="EMBL/GenBank/DDBJ databases">
        <title>Characterization of the popeye gene family in zebrafish.</title>
        <authorList>
            <person name="Brand T."/>
            <person name="Meyer D."/>
            <person name="Yelon D."/>
        </authorList>
    </citation>
    <scope>NUCLEOTIDE SEQUENCE [MRNA] (ISOFORM 2)</scope>
</reference>
<reference key="2">
    <citation type="submission" date="2004-12" db="EMBL/GenBank/DDBJ databases">
        <authorList>
            <consortium name="NIH - Zebrafish Gene Collection (ZGC) project"/>
        </authorList>
    </citation>
    <scope>NUCLEOTIDE SEQUENCE [LARGE SCALE MRNA] (ISOFORM 1)</scope>
    <source>
        <tissue>Embryo</tissue>
    </source>
</reference>
<reference key="3">
    <citation type="journal article" date="2016" name="J. Clin. Invest.">
        <title>POPDC1S201F causes muscular dystrophy and arrhythmia by affecting protein trafficking.</title>
        <authorList>
            <person name="Schindler R.F."/>
            <person name="Scotton C."/>
            <person name="Zhang J."/>
            <person name="Passarelli C."/>
            <person name="Ortiz-Bonnin B."/>
            <person name="Simrick S."/>
            <person name="Schwerte T."/>
            <person name="Poon K.L."/>
            <person name="Fang M."/>
            <person name="Rinne S."/>
            <person name="Froese A."/>
            <person name="Nikolaev V.O."/>
            <person name="Grunert C."/>
            <person name="Mueller T."/>
            <person name="Tasca G."/>
            <person name="Sarathchandra P."/>
            <person name="Drago F."/>
            <person name="Dallapiccola B."/>
            <person name="Rapezzi C."/>
            <person name="Arbustini E."/>
            <person name="Di Raimo F.R."/>
            <person name="Neri M."/>
            <person name="Selvatici R."/>
            <person name="Gualandi F."/>
            <person name="Fattori F."/>
            <person name="Pietrangelo A."/>
            <person name="Li W."/>
            <person name="Jiang H."/>
            <person name="Xu X."/>
            <person name="Bertini E."/>
            <person name="Decher N."/>
            <person name="Wang J."/>
            <person name="Brand T."/>
            <person name="Ferlini A."/>
        </authorList>
    </citation>
    <scope>FUNCTION</scope>
    <scope>DISRUPTION PHENOTYPE</scope>
    <scope>MUTAGENESIS OF SER-191</scope>
    <scope>SUBCELLULAR LOCATION</scope>
    <scope>TISSUE SPECIFICITY</scope>
</reference>
<keyword id="KW-0025">Alternative splicing</keyword>
<keyword id="KW-0114">cAMP</keyword>
<keyword id="KW-0116">cAMP-binding</keyword>
<keyword id="KW-0130">Cell adhesion</keyword>
<keyword id="KW-0965">Cell junction</keyword>
<keyword id="KW-1003">Cell membrane</keyword>
<keyword id="KW-0217">Developmental protein</keyword>
<keyword id="KW-0325">Glycoprotein</keyword>
<keyword id="KW-0472">Membrane</keyword>
<keyword id="KW-0547">Nucleotide-binding</keyword>
<keyword id="KW-1185">Reference proteome</keyword>
<keyword id="KW-0796">Tight junction</keyword>
<keyword id="KW-0812">Transmembrane</keyword>
<keyword id="KW-1133">Transmembrane helix</keyword>
<feature type="chain" id="PRO_0000394479" description="Popeye domain-containing protein 1">
    <location>
        <begin position="1"/>
        <end position="352"/>
    </location>
</feature>
<feature type="topological domain" description="Extracellular" evidence="3">
    <location>
        <begin position="1"/>
        <end position="38"/>
    </location>
</feature>
<feature type="transmembrane region" description="Helical" evidence="3">
    <location>
        <begin position="39"/>
        <end position="59"/>
    </location>
</feature>
<feature type="topological domain" description="Cytoplasmic" evidence="3">
    <location>
        <position position="60"/>
    </location>
</feature>
<feature type="transmembrane region" description="Helical" evidence="3">
    <location>
        <begin position="61"/>
        <end position="81"/>
    </location>
</feature>
<feature type="topological domain" description="Extracellular" evidence="3">
    <location>
        <position position="82"/>
    </location>
</feature>
<feature type="transmembrane region" description="Helical" evidence="3">
    <location>
        <begin position="83"/>
        <end position="103"/>
    </location>
</feature>
<feature type="topological domain" description="Cytoplasmic" evidence="3">
    <location>
        <begin position="104"/>
        <end position="352"/>
    </location>
</feature>
<feature type="region of interest" description="Disordered" evidence="4">
    <location>
        <begin position="299"/>
        <end position="352"/>
    </location>
</feature>
<feature type="compositionally biased region" description="Polar residues" evidence="4">
    <location>
        <begin position="306"/>
        <end position="321"/>
    </location>
</feature>
<feature type="compositionally biased region" description="Polar residues" evidence="4">
    <location>
        <begin position="336"/>
        <end position="346"/>
    </location>
</feature>
<feature type="glycosylation site" description="N-linked (GlcNAc...) asparagine" evidence="3">
    <location>
        <position position="3"/>
    </location>
</feature>
<feature type="glycosylation site" description="N-linked (GlcNAc...) asparagine" evidence="3">
    <location>
        <position position="20"/>
    </location>
</feature>
<feature type="splice variant" id="VSP_039269" description="In isoform 2." evidence="6">
    <original>QKNPLTKTSTTMKPIEEGLEDDVFESESPTTSQNVSKTTKKDI</original>
    <variation>PVTSDRA</variation>
    <location>
        <begin position="310"/>
        <end position="352"/>
    </location>
</feature>
<feature type="mutagenesis site" description="Mutants display myofibrillar misalignment, aberrant formation of the myotendinous junction, myofiber detachment with various degrees of severity and a reduction in heart rate and stroke volume. Membrane localization is diminished in muscle." evidence="5">
    <original>S</original>
    <variation>F</variation>
    <location>
        <position position="191"/>
    </location>
</feature>
<feature type="sequence conflict" description="In Ref. 1; AAQ57586/AAQ57587." evidence="7" ref="1">
    <original>S</original>
    <variation>T</variation>
    <location>
        <position position="221"/>
    </location>
</feature>
<accession>Q5PQZ7</accession>
<accession>Q6JWV9</accession>
<gene>
    <name type="primary">popdc1</name>
    <name type="synonym">bves</name>
    <name type="synonym">pop1</name>
</gene>
<proteinExistence type="evidence at protein level"/>